<proteinExistence type="inferred from homology"/>
<sequence>MVLEKVFLPEGVQDLLMKDCHHRRLIEGRLMEEWVKQGYMEVSSPTLEYYDLFRQGEQMLRGNKMFKLIDAKGDLLVLRPDGTLPIARMVATKMKDMVYPLKICYIQDIFRLDQEQAGKQREFRQAGVEVFGVESYEADGQVIITAIESLKALGLSDFQIEIGQTKILQSILDSMAVTTDEKDEIIMLIHNKNFSTLESLLEKLDIDPKTRLILKEIPNLFGTPQGVMESVAALPINDNIKRALEELQQICHMIQAYGFGQYISVDLGMTAPLGYYTGIIFKGFTKDLGTILCSGGRYDRLLMSFGMNCPATGFALLIDQIRKALHLGQQKKKESGPPYYLLVSHEGRHEEVAKEATRLKKTGCIVEVSLLKDPQAIDIYAKRRGVDKIIEIGEKK</sequence>
<keyword id="KW-0028">Amino-acid biosynthesis</keyword>
<keyword id="KW-0963">Cytoplasm</keyword>
<keyword id="KW-0368">Histidine biosynthesis</keyword>
<keyword id="KW-1185">Reference proteome</keyword>
<gene>
    <name evidence="1" type="primary">hisZ</name>
    <name type="ordered locus">Amet_0570</name>
</gene>
<evidence type="ECO:0000255" key="1">
    <source>
        <dbReference type="HAMAP-Rule" id="MF_00125"/>
    </source>
</evidence>
<comment type="function">
    <text evidence="1">Required for the first step of histidine biosynthesis. May allow the feedback regulation of ATP phosphoribosyltransferase activity by histidine.</text>
</comment>
<comment type="pathway">
    <text evidence="1">Amino-acid biosynthesis; L-histidine biosynthesis; L-histidine from 5-phospho-alpha-D-ribose 1-diphosphate: step 1/9.</text>
</comment>
<comment type="subunit">
    <text evidence="1">Heteromultimer composed of HisG and HisZ subunits.</text>
</comment>
<comment type="subcellular location">
    <subcellularLocation>
        <location evidence="1">Cytoplasm</location>
    </subcellularLocation>
</comment>
<comment type="miscellaneous">
    <text>This function is generally fulfilled by the C-terminal part of HisG, which is missing in some bacteria such as this one.</text>
</comment>
<comment type="similarity">
    <text evidence="1">Belongs to the class-II aminoacyl-tRNA synthetase family. HisZ subfamily.</text>
</comment>
<organism>
    <name type="scientific">Alkaliphilus metalliredigens (strain QYMF)</name>
    <dbReference type="NCBI Taxonomy" id="293826"/>
    <lineage>
        <taxon>Bacteria</taxon>
        <taxon>Bacillati</taxon>
        <taxon>Bacillota</taxon>
        <taxon>Clostridia</taxon>
        <taxon>Peptostreptococcales</taxon>
        <taxon>Natronincolaceae</taxon>
        <taxon>Alkaliphilus</taxon>
    </lineage>
</organism>
<dbReference type="EMBL" id="CP000724">
    <property type="protein sequence ID" value="ABR46797.1"/>
    <property type="molecule type" value="Genomic_DNA"/>
</dbReference>
<dbReference type="RefSeq" id="WP_011971705.1">
    <property type="nucleotide sequence ID" value="NC_009633.1"/>
</dbReference>
<dbReference type="SMR" id="A6TKS9"/>
<dbReference type="STRING" id="293826.Amet_0570"/>
<dbReference type="KEGG" id="amt:Amet_0570"/>
<dbReference type="eggNOG" id="COG3705">
    <property type="taxonomic scope" value="Bacteria"/>
</dbReference>
<dbReference type="HOGENOM" id="CLU_025113_0_2_9"/>
<dbReference type="OrthoDB" id="9800814at2"/>
<dbReference type="UniPathway" id="UPA00031">
    <property type="reaction ID" value="UER00006"/>
</dbReference>
<dbReference type="Proteomes" id="UP000001572">
    <property type="component" value="Chromosome"/>
</dbReference>
<dbReference type="GO" id="GO:0005737">
    <property type="term" value="C:cytoplasm"/>
    <property type="evidence" value="ECO:0007669"/>
    <property type="project" value="UniProtKB-SubCell"/>
</dbReference>
<dbReference type="GO" id="GO:0140096">
    <property type="term" value="F:catalytic activity, acting on a protein"/>
    <property type="evidence" value="ECO:0007669"/>
    <property type="project" value="UniProtKB-ARBA"/>
</dbReference>
<dbReference type="GO" id="GO:0004821">
    <property type="term" value="F:histidine-tRNA ligase activity"/>
    <property type="evidence" value="ECO:0007669"/>
    <property type="project" value="TreeGrafter"/>
</dbReference>
<dbReference type="GO" id="GO:0016740">
    <property type="term" value="F:transferase activity"/>
    <property type="evidence" value="ECO:0007669"/>
    <property type="project" value="UniProtKB-ARBA"/>
</dbReference>
<dbReference type="GO" id="GO:0006427">
    <property type="term" value="P:histidyl-tRNA aminoacylation"/>
    <property type="evidence" value="ECO:0007669"/>
    <property type="project" value="TreeGrafter"/>
</dbReference>
<dbReference type="GO" id="GO:0000105">
    <property type="term" value="P:L-histidine biosynthetic process"/>
    <property type="evidence" value="ECO:0007669"/>
    <property type="project" value="UniProtKB-UniRule"/>
</dbReference>
<dbReference type="CDD" id="cd00773">
    <property type="entry name" value="HisRS-like_core"/>
    <property type="match status" value="1"/>
</dbReference>
<dbReference type="Gene3D" id="3.30.930.10">
    <property type="entry name" value="Bira Bifunctional Protein, Domain 2"/>
    <property type="match status" value="1"/>
</dbReference>
<dbReference type="HAMAP" id="MF_00125">
    <property type="entry name" value="HisZ"/>
    <property type="match status" value="1"/>
</dbReference>
<dbReference type="InterPro" id="IPR006195">
    <property type="entry name" value="aa-tRNA-synth_II"/>
</dbReference>
<dbReference type="InterPro" id="IPR045864">
    <property type="entry name" value="aa-tRNA-synth_II/BPL/LPL"/>
</dbReference>
<dbReference type="InterPro" id="IPR041715">
    <property type="entry name" value="HisRS-like_core"/>
</dbReference>
<dbReference type="InterPro" id="IPR004516">
    <property type="entry name" value="HisRS/HisZ"/>
</dbReference>
<dbReference type="InterPro" id="IPR004517">
    <property type="entry name" value="HisZ"/>
</dbReference>
<dbReference type="NCBIfam" id="TIGR00443">
    <property type="entry name" value="hisZ_biosyn_reg"/>
    <property type="match status" value="1"/>
</dbReference>
<dbReference type="PANTHER" id="PTHR43707:SF6">
    <property type="entry name" value="ATP PHOSPHORIBOSYLTRANSFERASE REGULATORY SUBUNIT"/>
    <property type="match status" value="1"/>
</dbReference>
<dbReference type="PANTHER" id="PTHR43707">
    <property type="entry name" value="HISTIDYL-TRNA SYNTHETASE"/>
    <property type="match status" value="1"/>
</dbReference>
<dbReference type="Pfam" id="PF13393">
    <property type="entry name" value="tRNA-synt_His"/>
    <property type="match status" value="1"/>
</dbReference>
<dbReference type="PIRSF" id="PIRSF001549">
    <property type="entry name" value="His-tRNA_synth"/>
    <property type="match status" value="1"/>
</dbReference>
<dbReference type="SUPFAM" id="SSF55681">
    <property type="entry name" value="Class II aaRS and biotin synthetases"/>
    <property type="match status" value="1"/>
</dbReference>
<dbReference type="PROSITE" id="PS50862">
    <property type="entry name" value="AA_TRNA_LIGASE_II"/>
    <property type="match status" value="1"/>
</dbReference>
<protein>
    <recommendedName>
        <fullName evidence="1">ATP phosphoribosyltransferase regulatory subunit</fullName>
    </recommendedName>
</protein>
<name>HISZ_ALKMQ</name>
<reference key="1">
    <citation type="journal article" date="2016" name="Genome Announc.">
        <title>Complete genome sequence of Alkaliphilus metalliredigens strain QYMF, an alkaliphilic and metal-reducing bacterium isolated from borax-contaminated leachate ponds.</title>
        <authorList>
            <person name="Hwang C."/>
            <person name="Copeland A."/>
            <person name="Lucas S."/>
            <person name="Lapidus A."/>
            <person name="Barry K."/>
            <person name="Detter J.C."/>
            <person name="Glavina Del Rio T."/>
            <person name="Hammon N."/>
            <person name="Israni S."/>
            <person name="Dalin E."/>
            <person name="Tice H."/>
            <person name="Pitluck S."/>
            <person name="Chertkov O."/>
            <person name="Brettin T."/>
            <person name="Bruce D."/>
            <person name="Han C."/>
            <person name="Schmutz J."/>
            <person name="Larimer F."/>
            <person name="Land M.L."/>
            <person name="Hauser L."/>
            <person name="Kyrpides N."/>
            <person name="Mikhailova N."/>
            <person name="Ye Q."/>
            <person name="Zhou J."/>
            <person name="Richardson P."/>
            <person name="Fields M.W."/>
        </authorList>
    </citation>
    <scope>NUCLEOTIDE SEQUENCE [LARGE SCALE GENOMIC DNA]</scope>
    <source>
        <strain>QYMF</strain>
    </source>
</reference>
<feature type="chain" id="PRO_1000057816" description="ATP phosphoribosyltransferase regulatory subunit">
    <location>
        <begin position="1"/>
        <end position="396"/>
    </location>
</feature>
<accession>A6TKS9</accession>